<accession>A4VT83</accession>
<gene>
    <name evidence="1" type="primary">gatA</name>
    <name type="ordered locus">SSU05_0355</name>
</gene>
<name>GATA_STRSY</name>
<proteinExistence type="inferred from homology"/>
<organism>
    <name type="scientific">Streptococcus suis (strain 05ZYH33)</name>
    <dbReference type="NCBI Taxonomy" id="391295"/>
    <lineage>
        <taxon>Bacteria</taxon>
        <taxon>Bacillati</taxon>
        <taxon>Bacillota</taxon>
        <taxon>Bacilli</taxon>
        <taxon>Lactobacillales</taxon>
        <taxon>Streptococcaceae</taxon>
        <taxon>Streptococcus</taxon>
    </lineage>
</organism>
<sequence>MTFNNKTIDELHDLLVKKEISAVELTKATLEDIKSREGAVDAFLTITEDAALAQAAALDEKGIDADNVMAGIPLAVKDNISTKGILTTAASKMLYNYEPIFDATSVAQAYAKDMIIVGKTNMDEFAMGGSNENSAFKPTKNAWDQTKVPGGSSGGSAAAVASGQVRLSLGSDTGGSIRQPAAFNGIVGMKPTYGTVSRFGLIAFGSSLDQIGPFSQTVKENAQLLNVISGHDVKDATSTINEIADFTSKIGQDIKGMKIALPKEYMGEGIDPQVKETILKAAKHLESLGAIIEEVSLPHSKYGVAVYYIIASSEASSNLQRFDGIRYGFRAEDATNLDEIYVKTRSQGFGEEVKRRIMLGTFSLSSGYYDAYFKKAGQVRTLIIQDFEKVFADYDLILGPTAPTVAFGLDTLNHDPVAMYLADLLTIPVNLAGLPGLSIPAGFVEGLPVGLQLIGPKYSEETIYQVAAAFEATTDYHKQQPVIFGGAN</sequence>
<comment type="function">
    <text evidence="1">Allows the formation of correctly charged Gln-tRNA(Gln) through the transamidation of misacylated Glu-tRNA(Gln) in organisms which lack glutaminyl-tRNA synthetase. The reaction takes place in the presence of glutamine and ATP through an activated gamma-phospho-Glu-tRNA(Gln).</text>
</comment>
<comment type="catalytic activity">
    <reaction evidence="1">
        <text>L-glutamyl-tRNA(Gln) + L-glutamine + ATP + H2O = L-glutaminyl-tRNA(Gln) + L-glutamate + ADP + phosphate + H(+)</text>
        <dbReference type="Rhea" id="RHEA:17521"/>
        <dbReference type="Rhea" id="RHEA-COMP:9681"/>
        <dbReference type="Rhea" id="RHEA-COMP:9684"/>
        <dbReference type="ChEBI" id="CHEBI:15377"/>
        <dbReference type="ChEBI" id="CHEBI:15378"/>
        <dbReference type="ChEBI" id="CHEBI:29985"/>
        <dbReference type="ChEBI" id="CHEBI:30616"/>
        <dbReference type="ChEBI" id="CHEBI:43474"/>
        <dbReference type="ChEBI" id="CHEBI:58359"/>
        <dbReference type="ChEBI" id="CHEBI:78520"/>
        <dbReference type="ChEBI" id="CHEBI:78521"/>
        <dbReference type="ChEBI" id="CHEBI:456216"/>
        <dbReference type="EC" id="6.3.5.7"/>
    </reaction>
</comment>
<comment type="subunit">
    <text evidence="1">Heterotrimer of A, B and C subunits.</text>
</comment>
<comment type="similarity">
    <text evidence="1">Belongs to the amidase family. GatA subfamily.</text>
</comment>
<reference key="1">
    <citation type="journal article" date="2007" name="PLoS ONE">
        <title>A glimpse of streptococcal toxic shock syndrome from comparative genomics of S. suis 2 Chinese isolates.</title>
        <authorList>
            <person name="Chen C."/>
            <person name="Tang J."/>
            <person name="Dong W."/>
            <person name="Wang C."/>
            <person name="Feng Y."/>
            <person name="Wang J."/>
            <person name="Zheng F."/>
            <person name="Pan X."/>
            <person name="Liu D."/>
            <person name="Li M."/>
            <person name="Song Y."/>
            <person name="Zhu X."/>
            <person name="Sun H."/>
            <person name="Feng T."/>
            <person name="Guo Z."/>
            <person name="Ju A."/>
            <person name="Ge J."/>
            <person name="Dong Y."/>
            <person name="Sun W."/>
            <person name="Jiang Y."/>
            <person name="Wang J."/>
            <person name="Yan J."/>
            <person name="Yang H."/>
            <person name="Wang X."/>
            <person name="Gao G.F."/>
            <person name="Yang R."/>
            <person name="Wang J."/>
            <person name="Yu J."/>
        </authorList>
    </citation>
    <scope>NUCLEOTIDE SEQUENCE [LARGE SCALE GENOMIC DNA]</scope>
    <source>
        <strain>05ZYH33</strain>
    </source>
</reference>
<protein>
    <recommendedName>
        <fullName evidence="1">Glutamyl-tRNA(Gln) amidotransferase subunit A</fullName>
        <shortName evidence="1">Glu-ADT subunit A</shortName>
        <ecNumber evidence="1">6.3.5.7</ecNumber>
    </recommendedName>
</protein>
<keyword id="KW-0067">ATP-binding</keyword>
<keyword id="KW-0436">Ligase</keyword>
<keyword id="KW-0547">Nucleotide-binding</keyword>
<keyword id="KW-0648">Protein biosynthesis</keyword>
<evidence type="ECO:0000255" key="1">
    <source>
        <dbReference type="HAMAP-Rule" id="MF_00120"/>
    </source>
</evidence>
<dbReference type="EC" id="6.3.5.7" evidence="1"/>
<dbReference type="EMBL" id="CP000407">
    <property type="protein sequence ID" value="ABP89322.1"/>
    <property type="molecule type" value="Genomic_DNA"/>
</dbReference>
<dbReference type="SMR" id="A4VT83"/>
<dbReference type="STRING" id="391295.SSU05_0355"/>
<dbReference type="KEGG" id="ssu:SSU05_0355"/>
<dbReference type="eggNOG" id="COG0154">
    <property type="taxonomic scope" value="Bacteria"/>
</dbReference>
<dbReference type="HOGENOM" id="CLU_009600_0_3_9"/>
<dbReference type="GO" id="GO:0030956">
    <property type="term" value="C:glutamyl-tRNA(Gln) amidotransferase complex"/>
    <property type="evidence" value="ECO:0007669"/>
    <property type="project" value="InterPro"/>
</dbReference>
<dbReference type="GO" id="GO:0005524">
    <property type="term" value="F:ATP binding"/>
    <property type="evidence" value="ECO:0007669"/>
    <property type="project" value="UniProtKB-KW"/>
</dbReference>
<dbReference type="GO" id="GO:0050567">
    <property type="term" value="F:glutaminyl-tRNA synthase (glutamine-hydrolyzing) activity"/>
    <property type="evidence" value="ECO:0007669"/>
    <property type="project" value="UniProtKB-UniRule"/>
</dbReference>
<dbReference type="GO" id="GO:0006412">
    <property type="term" value="P:translation"/>
    <property type="evidence" value="ECO:0007669"/>
    <property type="project" value="UniProtKB-UniRule"/>
</dbReference>
<dbReference type="Gene3D" id="3.90.1300.10">
    <property type="entry name" value="Amidase signature (AS) domain"/>
    <property type="match status" value="1"/>
</dbReference>
<dbReference type="HAMAP" id="MF_00120">
    <property type="entry name" value="GatA"/>
    <property type="match status" value="1"/>
</dbReference>
<dbReference type="InterPro" id="IPR000120">
    <property type="entry name" value="Amidase"/>
</dbReference>
<dbReference type="InterPro" id="IPR020556">
    <property type="entry name" value="Amidase_CS"/>
</dbReference>
<dbReference type="InterPro" id="IPR023631">
    <property type="entry name" value="Amidase_dom"/>
</dbReference>
<dbReference type="InterPro" id="IPR036928">
    <property type="entry name" value="AS_sf"/>
</dbReference>
<dbReference type="InterPro" id="IPR004412">
    <property type="entry name" value="GatA"/>
</dbReference>
<dbReference type="NCBIfam" id="TIGR00132">
    <property type="entry name" value="gatA"/>
    <property type="match status" value="1"/>
</dbReference>
<dbReference type="PANTHER" id="PTHR11895:SF151">
    <property type="entry name" value="GLUTAMYL-TRNA(GLN) AMIDOTRANSFERASE SUBUNIT A"/>
    <property type="match status" value="1"/>
</dbReference>
<dbReference type="PANTHER" id="PTHR11895">
    <property type="entry name" value="TRANSAMIDASE"/>
    <property type="match status" value="1"/>
</dbReference>
<dbReference type="Pfam" id="PF01425">
    <property type="entry name" value="Amidase"/>
    <property type="match status" value="1"/>
</dbReference>
<dbReference type="SUPFAM" id="SSF75304">
    <property type="entry name" value="Amidase signature (AS) enzymes"/>
    <property type="match status" value="1"/>
</dbReference>
<dbReference type="PROSITE" id="PS00571">
    <property type="entry name" value="AMIDASES"/>
    <property type="match status" value="1"/>
</dbReference>
<feature type="chain" id="PRO_1000015918" description="Glutamyl-tRNA(Gln) amidotransferase subunit A">
    <location>
        <begin position="1"/>
        <end position="488"/>
    </location>
</feature>
<feature type="active site" description="Charge relay system" evidence="1">
    <location>
        <position position="77"/>
    </location>
</feature>
<feature type="active site" description="Charge relay system" evidence="1">
    <location>
        <position position="152"/>
    </location>
</feature>
<feature type="active site" description="Acyl-ester intermediate" evidence="1">
    <location>
        <position position="176"/>
    </location>
</feature>